<feature type="chain" id="PRO_1000126879" description="Large ribosomal subunit protein bL9">
    <location>
        <begin position="1"/>
        <end position="150"/>
    </location>
</feature>
<organism>
    <name type="scientific">Burkholderia cenocepacia (strain ATCC BAA-245 / DSM 16553 / LMG 16656 / NCTC 13227 / J2315 / CF5610)</name>
    <name type="common">Burkholderia cepacia (strain J2315)</name>
    <dbReference type="NCBI Taxonomy" id="216591"/>
    <lineage>
        <taxon>Bacteria</taxon>
        <taxon>Pseudomonadati</taxon>
        <taxon>Pseudomonadota</taxon>
        <taxon>Betaproteobacteria</taxon>
        <taxon>Burkholderiales</taxon>
        <taxon>Burkholderiaceae</taxon>
        <taxon>Burkholderia</taxon>
        <taxon>Burkholderia cepacia complex</taxon>
    </lineage>
</organism>
<accession>B4EBH0</accession>
<protein>
    <recommendedName>
        <fullName evidence="1">Large ribosomal subunit protein bL9</fullName>
    </recommendedName>
    <alternativeName>
        <fullName evidence="2">50S ribosomal protein L9</fullName>
    </alternativeName>
</protein>
<name>RL9_BURCJ</name>
<proteinExistence type="inferred from homology"/>
<keyword id="KW-0687">Ribonucleoprotein</keyword>
<keyword id="KW-0689">Ribosomal protein</keyword>
<keyword id="KW-0694">RNA-binding</keyword>
<keyword id="KW-0699">rRNA-binding</keyword>
<comment type="function">
    <text evidence="1">Binds to the 23S rRNA.</text>
</comment>
<comment type="similarity">
    <text evidence="1">Belongs to the bacterial ribosomal protein bL9 family.</text>
</comment>
<evidence type="ECO:0000255" key="1">
    <source>
        <dbReference type="HAMAP-Rule" id="MF_00503"/>
    </source>
</evidence>
<evidence type="ECO:0000305" key="2"/>
<gene>
    <name evidence="1" type="primary">rplI</name>
    <name type="ordered locus">BceJ2315_19060</name>
    <name type="ORF">BCAL1942</name>
</gene>
<dbReference type="EMBL" id="AM747720">
    <property type="protein sequence ID" value="CAR52243.1"/>
    <property type="molecule type" value="Genomic_DNA"/>
</dbReference>
<dbReference type="RefSeq" id="WP_006486256.1">
    <property type="nucleotide sequence ID" value="NC_011000.1"/>
</dbReference>
<dbReference type="SMR" id="B4EBH0"/>
<dbReference type="GeneID" id="83048667"/>
<dbReference type="KEGG" id="bcj:BCAL1942"/>
<dbReference type="eggNOG" id="COG0359">
    <property type="taxonomic scope" value="Bacteria"/>
</dbReference>
<dbReference type="HOGENOM" id="CLU_078938_4_1_4"/>
<dbReference type="BioCyc" id="BCEN216591:G1G1V-2136-MONOMER"/>
<dbReference type="Proteomes" id="UP000001035">
    <property type="component" value="Chromosome 1"/>
</dbReference>
<dbReference type="GO" id="GO:1990904">
    <property type="term" value="C:ribonucleoprotein complex"/>
    <property type="evidence" value="ECO:0007669"/>
    <property type="project" value="UniProtKB-KW"/>
</dbReference>
<dbReference type="GO" id="GO:0005840">
    <property type="term" value="C:ribosome"/>
    <property type="evidence" value="ECO:0007669"/>
    <property type="project" value="UniProtKB-KW"/>
</dbReference>
<dbReference type="GO" id="GO:0019843">
    <property type="term" value="F:rRNA binding"/>
    <property type="evidence" value="ECO:0007669"/>
    <property type="project" value="UniProtKB-UniRule"/>
</dbReference>
<dbReference type="GO" id="GO:0003735">
    <property type="term" value="F:structural constituent of ribosome"/>
    <property type="evidence" value="ECO:0007669"/>
    <property type="project" value="InterPro"/>
</dbReference>
<dbReference type="GO" id="GO:0006412">
    <property type="term" value="P:translation"/>
    <property type="evidence" value="ECO:0007669"/>
    <property type="project" value="UniProtKB-UniRule"/>
</dbReference>
<dbReference type="Gene3D" id="3.10.430.100">
    <property type="entry name" value="Ribosomal protein L9, C-terminal domain"/>
    <property type="match status" value="1"/>
</dbReference>
<dbReference type="Gene3D" id="3.40.5.10">
    <property type="entry name" value="Ribosomal protein L9, N-terminal domain"/>
    <property type="match status" value="1"/>
</dbReference>
<dbReference type="HAMAP" id="MF_00503">
    <property type="entry name" value="Ribosomal_bL9"/>
    <property type="match status" value="1"/>
</dbReference>
<dbReference type="InterPro" id="IPR000244">
    <property type="entry name" value="Ribosomal_bL9"/>
</dbReference>
<dbReference type="InterPro" id="IPR009027">
    <property type="entry name" value="Ribosomal_bL9/RNase_H1_N"/>
</dbReference>
<dbReference type="InterPro" id="IPR020594">
    <property type="entry name" value="Ribosomal_bL9_bac/chp"/>
</dbReference>
<dbReference type="InterPro" id="IPR020069">
    <property type="entry name" value="Ribosomal_bL9_C"/>
</dbReference>
<dbReference type="InterPro" id="IPR036791">
    <property type="entry name" value="Ribosomal_bL9_C_sf"/>
</dbReference>
<dbReference type="InterPro" id="IPR020070">
    <property type="entry name" value="Ribosomal_bL9_N"/>
</dbReference>
<dbReference type="InterPro" id="IPR036935">
    <property type="entry name" value="Ribosomal_bL9_N_sf"/>
</dbReference>
<dbReference type="NCBIfam" id="TIGR00158">
    <property type="entry name" value="L9"/>
    <property type="match status" value="1"/>
</dbReference>
<dbReference type="PANTHER" id="PTHR21368">
    <property type="entry name" value="50S RIBOSOMAL PROTEIN L9"/>
    <property type="match status" value="1"/>
</dbReference>
<dbReference type="Pfam" id="PF03948">
    <property type="entry name" value="Ribosomal_L9_C"/>
    <property type="match status" value="1"/>
</dbReference>
<dbReference type="Pfam" id="PF01281">
    <property type="entry name" value="Ribosomal_L9_N"/>
    <property type="match status" value="1"/>
</dbReference>
<dbReference type="SUPFAM" id="SSF55658">
    <property type="entry name" value="L9 N-domain-like"/>
    <property type="match status" value="1"/>
</dbReference>
<dbReference type="SUPFAM" id="SSF55653">
    <property type="entry name" value="Ribosomal protein L9 C-domain"/>
    <property type="match status" value="1"/>
</dbReference>
<dbReference type="PROSITE" id="PS00651">
    <property type="entry name" value="RIBOSOMAL_L9"/>
    <property type="match status" value="1"/>
</dbReference>
<reference key="1">
    <citation type="journal article" date="2009" name="J. Bacteriol.">
        <title>The genome of Burkholderia cenocepacia J2315, an epidemic pathogen of cystic fibrosis patients.</title>
        <authorList>
            <person name="Holden M.T."/>
            <person name="Seth-Smith H.M."/>
            <person name="Crossman L.C."/>
            <person name="Sebaihia M."/>
            <person name="Bentley S.D."/>
            <person name="Cerdeno-Tarraga A.M."/>
            <person name="Thomson N.R."/>
            <person name="Bason N."/>
            <person name="Quail M.A."/>
            <person name="Sharp S."/>
            <person name="Cherevach I."/>
            <person name="Churcher C."/>
            <person name="Goodhead I."/>
            <person name="Hauser H."/>
            <person name="Holroyd N."/>
            <person name="Mungall K."/>
            <person name="Scott P."/>
            <person name="Walker D."/>
            <person name="White B."/>
            <person name="Rose H."/>
            <person name="Iversen P."/>
            <person name="Mil-Homens D."/>
            <person name="Rocha E.P."/>
            <person name="Fialho A.M."/>
            <person name="Baldwin A."/>
            <person name="Dowson C."/>
            <person name="Barrell B.G."/>
            <person name="Govan J.R."/>
            <person name="Vandamme P."/>
            <person name="Hart C.A."/>
            <person name="Mahenthiralingam E."/>
            <person name="Parkhill J."/>
        </authorList>
    </citation>
    <scope>NUCLEOTIDE SEQUENCE [LARGE SCALE GENOMIC DNA]</scope>
    <source>
        <strain>ATCC BAA-245 / DSM 16553 / LMG 16656 / NCTC 13227 / J2315 / CF5610</strain>
    </source>
</reference>
<sequence length="150" mass="16374">MQIILLEKVANLGNLGDIVKVKDGYARNFLIPNRKARRATKEAIAEFEVRRAELEKIAAEKLAASQAVGEKLNGQSFEITQKSGVDGRLFGSVTNGDVAELLKKAGYEVEKLQVRMPEGPLKMIGEHNVQVALHTDVVVDVTINVIGDHA</sequence>